<protein>
    <recommendedName>
        <fullName evidence="1">Probable nicotinate-nucleotide adenylyltransferase</fullName>
        <ecNumber evidence="1">2.7.7.18</ecNumber>
    </recommendedName>
    <alternativeName>
        <fullName evidence="1">Deamido-NAD(+) diphosphorylase</fullName>
    </alternativeName>
    <alternativeName>
        <fullName evidence="1">Deamido-NAD(+) pyrophosphorylase</fullName>
    </alternativeName>
    <alternativeName>
        <fullName evidence="1">Nicotinate mononucleotide adenylyltransferase</fullName>
        <shortName evidence="1">NaMN adenylyltransferase</shortName>
    </alternativeName>
</protein>
<gene>
    <name evidence="1" type="primary">nadD</name>
    <name type="ordered locus">Mpe_A1340</name>
</gene>
<accession>A2SFG3</accession>
<evidence type="ECO:0000255" key="1">
    <source>
        <dbReference type="HAMAP-Rule" id="MF_00244"/>
    </source>
</evidence>
<dbReference type="EC" id="2.7.7.18" evidence="1"/>
<dbReference type="EMBL" id="CP000555">
    <property type="protein sequence ID" value="ABM94302.1"/>
    <property type="molecule type" value="Genomic_DNA"/>
</dbReference>
<dbReference type="RefSeq" id="WP_011828939.1">
    <property type="nucleotide sequence ID" value="NC_008825.1"/>
</dbReference>
<dbReference type="SMR" id="A2SFG3"/>
<dbReference type="STRING" id="420662.Mpe_A1340"/>
<dbReference type="KEGG" id="mpt:Mpe_A1340"/>
<dbReference type="eggNOG" id="COG1057">
    <property type="taxonomic scope" value="Bacteria"/>
</dbReference>
<dbReference type="HOGENOM" id="CLU_069765_3_1_4"/>
<dbReference type="UniPathway" id="UPA00253">
    <property type="reaction ID" value="UER00332"/>
</dbReference>
<dbReference type="Proteomes" id="UP000000366">
    <property type="component" value="Chromosome"/>
</dbReference>
<dbReference type="GO" id="GO:0005524">
    <property type="term" value="F:ATP binding"/>
    <property type="evidence" value="ECO:0007669"/>
    <property type="project" value="UniProtKB-KW"/>
</dbReference>
<dbReference type="GO" id="GO:0004515">
    <property type="term" value="F:nicotinate-nucleotide adenylyltransferase activity"/>
    <property type="evidence" value="ECO:0007669"/>
    <property type="project" value="UniProtKB-UniRule"/>
</dbReference>
<dbReference type="GO" id="GO:0009435">
    <property type="term" value="P:NAD biosynthetic process"/>
    <property type="evidence" value="ECO:0007669"/>
    <property type="project" value="UniProtKB-UniRule"/>
</dbReference>
<dbReference type="CDD" id="cd02165">
    <property type="entry name" value="NMNAT"/>
    <property type="match status" value="1"/>
</dbReference>
<dbReference type="Gene3D" id="3.40.50.620">
    <property type="entry name" value="HUPs"/>
    <property type="match status" value="1"/>
</dbReference>
<dbReference type="HAMAP" id="MF_00244">
    <property type="entry name" value="NaMN_adenylyltr"/>
    <property type="match status" value="1"/>
</dbReference>
<dbReference type="InterPro" id="IPR004821">
    <property type="entry name" value="Cyt_trans-like"/>
</dbReference>
<dbReference type="InterPro" id="IPR005248">
    <property type="entry name" value="NadD/NMNAT"/>
</dbReference>
<dbReference type="InterPro" id="IPR014729">
    <property type="entry name" value="Rossmann-like_a/b/a_fold"/>
</dbReference>
<dbReference type="NCBIfam" id="TIGR00125">
    <property type="entry name" value="cyt_tran_rel"/>
    <property type="match status" value="1"/>
</dbReference>
<dbReference type="NCBIfam" id="TIGR00482">
    <property type="entry name" value="nicotinate (nicotinamide) nucleotide adenylyltransferase"/>
    <property type="match status" value="1"/>
</dbReference>
<dbReference type="NCBIfam" id="NF000840">
    <property type="entry name" value="PRK00071.1-3"/>
    <property type="match status" value="1"/>
</dbReference>
<dbReference type="PANTHER" id="PTHR39321">
    <property type="entry name" value="NICOTINATE-NUCLEOTIDE ADENYLYLTRANSFERASE-RELATED"/>
    <property type="match status" value="1"/>
</dbReference>
<dbReference type="PANTHER" id="PTHR39321:SF3">
    <property type="entry name" value="PHOSPHOPANTETHEINE ADENYLYLTRANSFERASE"/>
    <property type="match status" value="1"/>
</dbReference>
<dbReference type="Pfam" id="PF01467">
    <property type="entry name" value="CTP_transf_like"/>
    <property type="match status" value="1"/>
</dbReference>
<dbReference type="SUPFAM" id="SSF52374">
    <property type="entry name" value="Nucleotidylyl transferase"/>
    <property type="match status" value="1"/>
</dbReference>
<organism>
    <name type="scientific">Methylibium petroleiphilum (strain ATCC BAA-1232 / LMG 22953 / PM1)</name>
    <dbReference type="NCBI Taxonomy" id="420662"/>
    <lineage>
        <taxon>Bacteria</taxon>
        <taxon>Pseudomonadati</taxon>
        <taxon>Pseudomonadota</taxon>
        <taxon>Betaproteobacteria</taxon>
        <taxon>Burkholderiales</taxon>
        <taxon>Sphaerotilaceae</taxon>
        <taxon>Methylibium</taxon>
    </lineage>
</organism>
<sequence length="212" mass="23559">MNASPQRRIGLYGGSFDPPHMGHLVLAMTAVQHLKLDELRWIPAGVAWQKERTLLSATHRAGMVKAAITGHRGFKLDRREIERNGPSYTIDTVRESQLAEPNAKWFLVIGQDQYERLPTWHEWRELITRVTLAVAGRDGKSPSPPSELLAVWHRIEALPMPPMNVSSTAIRAHLAAGGTAQSLVPDMVPTVVARYIDRYHLYAPPRGGVPAA</sequence>
<keyword id="KW-0067">ATP-binding</keyword>
<keyword id="KW-0520">NAD</keyword>
<keyword id="KW-0547">Nucleotide-binding</keyword>
<keyword id="KW-0548">Nucleotidyltransferase</keyword>
<keyword id="KW-0662">Pyridine nucleotide biosynthesis</keyword>
<keyword id="KW-1185">Reference proteome</keyword>
<keyword id="KW-0808">Transferase</keyword>
<comment type="function">
    <text evidence="1">Catalyzes the reversible adenylation of nicotinate mononucleotide (NaMN) to nicotinic acid adenine dinucleotide (NaAD).</text>
</comment>
<comment type="catalytic activity">
    <reaction evidence="1">
        <text>nicotinate beta-D-ribonucleotide + ATP + H(+) = deamido-NAD(+) + diphosphate</text>
        <dbReference type="Rhea" id="RHEA:22860"/>
        <dbReference type="ChEBI" id="CHEBI:15378"/>
        <dbReference type="ChEBI" id="CHEBI:30616"/>
        <dbReference type="ChEBI" id="CHEBI:33019"/>
        <dbReference type="ChEBI" id="CHEBI:57502"/>
        <dbReference type="ChEBI" id="CHEBI:58437"/>
        <dbReference type="EC" id="2.7.7.18"/>
    </reaction>
</comment>
<comment type="pathway">
    <text evidence="1">Cofactor biosynthesis; NAD(+) biosynthesis; deamido-NAD(+) from nicotinate D-ribonucleotide: step 1/1.</text>
</comment>
<comment type="similarity">
    <text evidence="1">Belongs to the NadD family.</text>
</comment>
<name>NADD_METPP</name>
<reference key="1">
    <citation type="journal article" date="2007" name="J. Bacteriol.">
        <title>Whole-genome analysis of the methyl tert-butyl ether-degrading beta-proteobacterium Methylibium petroleiphilum PM1.</title>
        <authorList>
            <person name="Kane S.R."/>
            <person name="Chakicherla A.Y."/>
            <person name="Chain P.S.G."/>
            <person name="Schmidt R."/>
            <person name="Shin M.W."/>
            <person name="Legler T.C."/>
            <person name="Scow K.M."/>
            <person name="Larimer F.W."/>
            <person name="Lucas S.M."/>
            <person name="Richardson P.M."/>
            <person name="Hristova K.R."/>
        </authorList>
    </citation>
    <scope>NUCLEOTIDE SEQUENCE [LARGE SCALE GENOMIC DNA]</scope>
    <source>
        <strain>ATCC BAA-1232 / LMG 22953 / PM1</strain>
    </source>
</reference>
<feature type="chain" id="PRO_0000336706" description="Probable nicotinate-nucleotide adenylyltransferase">
    <location>
        <begin position="1"/>
        <end position="212"/>
    </location>
</feature>
<proteinExistence type="inferred from homology"/>